<feature type="chain" id="PRO_1000053878" description="Bifunctional protein PyrR">
    <location>
        <begin position="1"/>
        <end position="173"/>
    </location>
</feature>
<feature type="short sequence motif" description="PRPP-binding" evidence="1">
    <location>
        <begin position="93"/>
        <end position="105"/>
    </location>
</feature>
<keyword id="KW-0328">Glycosyltransferase</keyword>
<keyword id="KW-0694">RNA-binding</keyword>
<keyword id="KW-0804">Transcription</keyword>
<keyword id="KW-0805">Transcription regulation</keyword>
<keyword id="KW-0806">Transcription termination</keyword>
<keyword id="KW-0808">Transferase</keyword>
<dbReference type="EC" id="2.4.2.9" evidence="1"/>
<dbReference type="EMBL" id="CP000024">
    <property type="protein sequence ID" value="AAV62120.1"/>
    <property type="molecule type" value="Genomic_DNA"/>
</dbReference>
<dbReference type="RefSeq" id="WP_002944491.1">
    <property type="nucleotide sequence ID" value="NC_006449.1"/>
</dbReference>
<dbReference type="SMR" id="Q5M0X3"/>
<dbReference type="KEGG" id="stc:str0523"/>
<dbReference type="HOGENOM" id="CLU_094234_2_1_9"/>
<dbReference type="GO" id="GO:0003723">
    <property type="term" value="F:RNA binding"/>
    <property type="evidence" value="ECO:0007669"/>
    <property type="project" value="UniProtKB-UniRule"/>
</dbReference>
<dbReference type="GO" id="GO:0004845">
    <property type="term" value="F:uracil phosphoribosyltransferase activity"/>
    <property type="evidence" value="ECO:0007669"/>
    <property type="project" value="UniProtKB-UniRule"/>
</dbReference>
<dbReference type="GO" id="GO:0006353">
    <property type="term" value="P:DNA-templated transcription termination"/>
    <property type="evidence" value="ECO:0007669"/>
    <property type="project" value="UniProtKB-UniRule"/>
</dbReference>
<dbReference type="CDD" id="cd06223">
    <property type="entry name" value="PRTases_typeI"/>
    <property type="match status" value="1"/>
</dbReference>
<dbReference type="FunFam" id="3.40.50.2020:FF:000020">
    <property type="entry name" value="Bifunctional protein PyrR"/>
    <property type="match status" value="1"/>
</dbReference>
<dbReference type="Gene3D" id="3.40.50.2020">
    <property type="match status" value="1"/>
</dbReference>
<dbReference type="HAMAP" id="MF_01219">
    <property type="entry name" value="PyrR"/>
    <property type="match status" value="1"/>
</dbReference>
<dbReference type="InterPro" id="IPR000836">
    <property type="entry name" value="PRibTrfase_dom"/>
</dbReference>
<dbReference type="InterPro" id="IPR029057">
    <property type="entry name" value="PRTase-like"/>
</dbReference>
<dbReference type="InterPro" id="IPR023050">
    <property type="entry name" value="PyrR"/>
</dbReference>
<dbReference type="InterPro" id="IPR050137">
    <property type="entry name" value="PyrR_bifunctional"/>
</dbReference>
<dbReference type="NCBIfam" id="NF003548">
    <property type="entry name" value="PRK05205.1-4"/>
    <property type="match status" value="1"/>
</dbReference>
<dbReference type="NCBIfam" id="NF003549">
    <property type="entry name" value="PRK05205.1-5"/>
    <property type="match status" value="1"/>
</dbReference>
<dbReference type="PANTHER" id="PTHR11608">
    <property type="entry name" value="BIFUNCTIONAL PROTEIN PYRR"/>
    <property type="match status" value="1"/>
</dbReference>
<dbReference type="PANTHER" id="PTHR11608:SF0">
    <property type="entry name" value="BIFUNCTIONAL PROTEIN PYRR"/>
    <property type="match status" value="1"/>
</dbReference>
<dbReference type="Pfam" id="PF00156">
    <property type="entry name" value="Pribosyltran"/>
    <property type="match status" value="1"/>
</dbReference>
<dbReference type="SUPFAM" id="SSF53271">
    <property type="entry name" value="PRTase-like"/>
    <property type="match status" value="1"/>
</dbReference>
<name>PYRR_STRT1</name>
<accession>Q5M0X3</accession>
<proteinExistence type="inferred from homology"/>
<evidence type="ECO:0000255" key="1">
    <source>
        <dbReference type="HAMAP-Rule" id="MF_01219"/>
    </source>
</evidence>
<reference key="1">
    <citation type="journal article" date="2004" name="Nat. Biotechnol.">
        <title>Complete sequence and comparative genome analysis of the dairy bacterium Streptococcus thermophilus.</title>
        <authorList>
            <person name="Bolotin A."/>
            <person name="Quinquis B."/>
            <person name="Renault P."/>
            <person name="Sorokin A."/>
            <person name="Ehrlich S.D."/>
            <person name="Kulakauskas S."/>
            <person name="Lapidus A."/>
            <person name="Goltsman E."/>
            <person name="Mazur M."/>
            <person name="Pusch G.D."/>
            <person name="Fonstein M."/>
            <person name="Overbeek R."/>
            <person name="Kyprides N."/>
            <person name="Purnelle B."/>
            <person name="Prozzi D."/>
            <person name="Ngui K."/>
            <person name="Masuy D."/>
            <person name="Hancy F."/>
            <person name="Burteau S."/>
            <person name="Boutry M."/>
            <person name="Delcour J."/>
            <person name="Goffeau A."/>
            <person name="Hols P."/>
        </authorList>
    </citation>
    <scope>NUCLEOTIDE SEQUENCE [LARGE SCALE GENOMIC DNA]</scope>
    <source>
        <strain>CNRZ 1066</strain>
    </source>
</reference>
<gene>
    <name evidence="1" type="primary">pyrR</name>
    <name type="ordered locus">str0523</name>
</gene>
<sequence length="173" mass="19513">MKKKEIVDDVTMKRAITRITYEIIERNKNLDKIVLAGIKTRGVYIAQRIQERLKQLENLDVPLIELDTKAYRDDVKSEQDTSLIPIEIDGTDVILVDDVLYTGRTIRAAIDNIVSHGRPARVGLAVLVDRGHRELPIRADYVGKNIPTSQSEEIEVLVTEVDGKDSVNIIDPN</sequence>
<comment type="function">
    <text evidence="1">Regulates transcriptional attenuation of the pyrimidine nucleotide (pyr) operon by binding in a uridine-dependent manner to specific sites on pyr mRNA. This disrupts an antiterminator hairpin in the RNA and favors formation of a downstream transcription terminator, leading to a reduced expression of downstream genes.</text>
</comment>
<comment type="function">
    <text evidence="1">Also displays a weak uracil phosphoribosyltransferase activity which is not physiologically significant.</text>
</comment>
<comment type="catalytic activity">
    <reaction evidence="1">
        <text>UMP + diphosphate = 5-phospho-alpha-D-ribose 1-diphosphate + uracil</text>
        <dbReference type="Rhea" id="RHEA:13017"/>
        <dbReference type="ChEBI" id="CHEBI:17568"/>
        <dbReference type="ChEBI" id="CHEBI:33019"/>
        <dbReference type="ChEBI" id="CHEBI:57865"/>
        <dbReference type="ChEBI" id="CHEBI:58017"/>
        <dbReference type="EC" id="2.4.2.9"/>
    </reaction>
</comment>
<comment type="subunit">
    <text evidence="1">Homodimer and homohexamer; in equilibrium.</text>
</comment>
<comment type="similarity">
    <text evidence="1">Belongs to the purine/pyrimidine phosphoribosyltransferase family. PyrR subfamily.</text>
</comment>
<protein>
    <recommendedName>
        <fullName evidence="1">Bifunctional protein PyrR</fullName>
    </recommendedName>
    <domain>
        <recommendedName>
            <fullName evidence="1">Pyrimidine operon regulatory protein</fullName>
        </recommendedName>
    </domain>
    <domain>
        <recommendedName>
            <fullName evidence="1">Uracil phosphoribosyltransferase</fullName>
            <shortName evidence="1">UPRTase</shortName>
            <ecNumber evidence="1">2.4.2.9</ecNumber>
        </recommendedName>
    </domain>
</protein>
<organism>
    <name type="scientific">Streptococcus thermophilus (strain CNRZ 1066)</name>
    <dbReference type="NCBI Taxonomy" id="299768"/>
    <lineage>
        <taxon>Bacteria</taxon>
        <taxon>Bacillati</taxon>
        <taxon>Bacillota</taxon>
        <taxon>Bacilli</taxon>
        <taxon>Lactobacillales</taxon>
        <taxon>Streptococcaceae</taxon>
        <taxon>Streptococcus</taxon>
    </lineage>
</organism>